<organism>
    <name type="scientific">Pseudomonas aeruginosa</name>
    <dbReference type="NCBI Taxonomy" id="287"/>
    <lineage>
        <taxon>Bacteria</taxon>
        <taxon>Pseudomonadati</taxon>
        <taxon>Pseudomonadota</taxon>
        <taxon>Gammaproteobacteria</taxon>
        <taxon>Pseudomonadales</taxon>
        <taxon>Pseudomonadaceae</taxon>
        <taxon>Pseudomonas</taxon>
    </lineage>
</organism>
<feature type="chain" id="PRO_0000413373" description="3',5'-cyclic adenosine monophosphate phosphodiesterase CpdA">
    <location>
        <begin position="1"/>
        <end position="272"/>
    </location>
</feature>
<feature type="binding site" evidence="2">
    <location>
        <position position="21"/>
    </location>
    <ligand>
        <name>Fe cation</name>
        <dbReference type="ChEBI" id="CHEBI:24875"/>
        <label>1</label>
    </ligand>
</feature>
<feature type="binding site" evidence="1">
    <location>
        <position position="23"/>
    </location>
    <ligand>
        <name>AMP</name>
        <dbReference type="ChEBI" id="CHEBI:456215"/>
    </ligand>
</feature>
<feature type="binding site" evidence="2">
    <location>
        <position position="23"/>
    </location>
    <ligand>
        <name>Fe cation</name>
        <dbReference type="ChEBI" id="CHEBI:24875"/>
        <label>1</label>
    </ligand>
</feature>
<feature type="binding site" evidence="1">
    <location>
        <position position="63"/>
    </location>
    <ligand>
        <name>AMP</name>
        <dbReference type="ChEBI" id="CHEBI:456215"/>
    </ligand>
</feature>
<feature type="binding site" evidence="2">
    <location>
        <position position="63"/>
    </location>
    <ligand>
        <name>Fe cation</name>
        <dbReference type="ChEBI" id="CHEBI:24875"/>
        <label>1</label>
    </ligand>
</feature>
<feature type="binding site" evidence="2">
    <location>
        <position position="63"/>
    </location>
    <ligand>
        <name>Fe cation</name>
        <dbReference type="ChEBI" id="CHEBI:24875"/>
        <label>2</label>
    </ligand>
</feature>
<feature type="binding site" evidence="1">
    <location>
        <begin position="93"/>
        <end position="94"/>
    </location>
    <ligand>
        <name>AMP</name>
        <dbReference type="ChEBI" id="CHEBI:456215"/>
    </ligand>
</feature>
<feature type="binding site" evidence="2">
    <location>
        <position position="93"/>
    </location>
    <ligand>
        <name>Fe cation</name>
        <dbReference type="ChEBI" id="CHEBI:24875"/>
        <label>2</label>
    </ligand>
</feature>
<feature type="binding site" evidence="2">
    <location>
        <position position="161"/>
    </location>
    <ligand>
        <name>Fe cation</name>
        <dbReference type="ChEBI" id="CHEBI:24875"/>
        <label>2</label>
    </ligand>
</feature>
<feature type="binding site" evidence="2">
    <location>
        <position position="200"/>
    </location>
    <ligand>
        <name>Fe cation</name>
        <dbReference type="ChEBI" id="CHEBI:24875"/>
        <label>2</label>
    </ligand>
</feature>
<feature type="binding site" evidence="1">
    <location>
        <position position="202"/>
    </location>
    <ligand>
        <name>AMP</name>
        <dbReference type="ChEBI" id="CHEBI:456215"/>
    </ligand>
</feature>
<feature type="binding site" evidence="2">
    <location>
        <position position="202"/>
    </location>
    <ligand>
        <name>Fe cation</name>
        <dbReference type="ChEBI" id="CHEBI:24875"/>
        <label>1</label>
    </ligand>
</feature>
<feature type="mutagenesis site" description="Loss of activity." evidence="3">
    <original>H</original>
    <variation>A</variation>
    <location>
        <position position="23"/>
    </location>
</feature>
<feature type="mutagenesis site" description="Loss of activity." evidence="3">
    <original>D</original>
    <variation>A</variation>
    <location>
        <position position="63"/>
    </location>
</feature>
<feature type="mutagenesis site" description="Loss of activity." evidence="3">
    <original>N</original>
    <variation>A</variation>
    <location>
        <position position="93"/>
    </location>
</feature>
<protein>
    <recommendedName>
        <fullName evidence="5">3',5'-cyclic adenosine monophosphate phosphodiesterase CpdA</fullName>
        <shortName evidence="5">3',5'-cyclic AMP phosphodiesterase</shortName>
        <shortName evidence="4">cAMP phosphodiesterase</shortName>
        <ecNumber evidence="3">3.1.4.53</ecNumber>
    </recommendedName>
</protein>
<proteinExistence type="evidence at protein level"/>
<sequence>MSRHSNTPATDASVLLVQLSDSHLFAEDGARLLGMDTAHSLEKVVERVAREQPRIDLILATGDVSQDGSLDSYTRFRRLSAPLAAPLRWFAGNHDEREPMQRATEGSDLLEQIVDVGNWRVVLLDSSIPGAVPGYLEDDQLDLLRRAIDSAGERFLLVSFHHHPVPIGSDWMDPIGLRNPQALFDLLAPYPQLRCLLWGHIHQEFDRQRGPLRLLASPSTCVQFAPGSSDFTLDRLAPGYRWLRLHDDGRLETGISRVDDVVFEVDYDTAGY</sequence>
<comment type="function">
    <text evidence="3">Hydrolyzes cAMP to 5'-AMP. Plays an important regulatory role in modulating the intracellular concentration of cAMP, thereby influencing cAMP-dependent processes. Specifically required for regulation of virulence factors. Can also hydrolyze cGMP, but cGMP is unlikely to be synthesized by P.aeruginosa and cAMP is probably the biologically relevant substrate for CpdA in vivo.</text>
</comment>
<comment type="catalytic activity">
    <reaction evidence="3">
        <text>3',5'-cyclic AMP + H2O = AMP + H(+)</text>
        <dbReference type="Rhea" id="RHEA:25277"/>
        <dbReference type="ChEBI" id="CHEBI:15377"/>
        <dbReference type="ChEBI" id="CHEBI:15378"/>
        <dbReference type="ChEBI" id="CHEBI:58165"/>
        <dbReference type="ChEBI" id="CHEBI:456215"/>
        <dbReference type="EC" id="3.1.4.53"/>
    </reaction>
</comment>
<comment type="cofactor">
    <cofactor evidence="3">
        <name>a divalent metal cation</name>
        <dbReference type="ChEBI" id="CHEBI:60240"/>
    </cofactor>
    <text evidence="3">Binds 2 metal cations per subunit. Site 1 may preferentially bind Fe(3+) ions, while site 2 may have a preference for Fe(2+) ions.</text>
</comment>
<comment type="activity regulation">
    <text evidence="3">Activated by iron. Other divalent metal ions have no effect.</text>
</comment>
<comment type="biophysicochemical properties">
    <kinetics>
        <KM evidence="3">7.2 uM for cAMP</KM>
        <Vmax evidence="3">3.4 nmol/min/ng enzyme</Vmax>
    </kinetics>
</comment>
<comment type="subunit">
    <text evidence="3">Monomer.</text>
</comment>
<comment type="induction">
    <text evidence="3">Positively regulated by Vfr in response to elevated intracellular cAMP.</text>
</comment>
<comment type="disruption phenotype">
    <text evidence="3">Mutants show increased levels of cellular cAMP. In rich medium, mutants exhibit a significantly reduced growth rate compared to wild-type strain.</text>
</comment>
<comment type="similarity">
    <text evidence="5">Belongs to the cyclic nucleotide phosphodiesterase class-III family.</text>
</comment>
<gene>
    <name evidence="4" type="primary">cpdA</name>
</gene>
<evidence type="ECO:0000250" key="1">
    <source>
        <dbReference type="UniProtKB" id="P9WP65"/>
    </source>
</evidence>
<evidence type="ECO:0000250" key="2">
    <source>
        <dbReference type="UniProtKB" id="Q6XBH1"/>
    </source>
</evidence>
<evidence type="ECO:0000269" key="3">
    <source>
    </source>
</evidence>
<evidence type="ECO:0000303" key="4">
    <source>
    </source>
</evidence>
<evidence type="ECO:0000305" key="5"/>
<name>CNPD3_PSEAI</name>
<reference key="1">
    <citation type="journal article" date="2010" name="J. Bacteriol.">
        <title>In vitro and in vivo characterization of the Pseudomonas aeruginosa cyclic AMP (cAMP) phosphodiesterase CpdA, required for cAMP homeostasis and virulence factor regulation.</title>
        <authorList>
            <person name="Fuchs E.L."/>
            <person name="Brutinel E.D."/>
            <person name="Klem E.R."/>
            <person name="Fehr A.R."/>
            <person name="Yahr T.L."/>
            <person name="Wolfgang M.C."/>
        </authorList>
    </citation>
    <scope>NUCLEOTIDE SEQUENCE [GENOMIC DNA]</scope>
    <scope>FUNCTION</scope>
    <scope>CATALYTIC ACTIVITY</scope>
    <scope>COFACTOR</scope>
    <scope>ACTIVITY REGULATION</scope>
    <scope>BIOPHYSICOCHEMICAL PROPERTIES</scope>
    <scope>SUBUNIT</scope>
    <scope>INDUCTION</scope>
    <scope>DISRUPTION PHENOTYPE</scope>
    <scope>MUTAGENESIS OF HIS-23; ASP-63 AND ASN-93</scope>
    <source>
        <strain>PAK</strain>
    </source>
</reference>
<dbReference type="EC" id="3.1.4.53" evidence="3"/>
<dbReference type="EMBL" id="GU551724">
    <property type="protein sequence ID" value="ADD69827.1"/>
    <property type="molecule type" value="Genomic_DNA"/>
</dbReference>
<dbReference type="RefSeq" id="WP_016253970.1">
    <property type="nucleotide sequence ID" value="NZ_MCMY01000004.1"/>
</dbReference>
<dbReference type="SMR" id="D4P095"/>
<dbReference type="eggNOG" id="COG1409">
    <property type="taxonomic scope" value="Bacteria"/>
</dbReference>
<dbReference type="BRENDA" id="3.1.4.53">
    <property type="organism ID" value="5087"/>
</dbReference>
<dbReference type="SABIO-RK" id="D4P095"/>
<dbReference type="GO" id="GO:0004115">
    <property type="term" value="F:3',5'-cyclic-AMP phosphodiesterase activity"/>
    <property type="evidence" value="ECO:0007669"/>
    <property type="project" value="UniProtKB-EC"/>
</dbReference>
<dbReference type="GO" id="GO:0046872">
    <property type="term" value="F:metal ion binding"/>
    <property type="evidence" value="ECO:0007669"/>
    <property type="project" value="UniProtKB-KW"/>
</dbReference>
<dbReference type="GO" id="GO:0000166">
    <property type="term" value="F:nucleotide binding"/>
    <property type="evidence" value="ECO:0007669"/>
    <property type="project" value="UniProtKB-KW"/>
</dbReference>
<dbReference type="CDD" id="cd07402">
    <property type="entry name" value="MPP_GpdQ"/>
    <property type="match status" value="1"/>
</dbReference>
<dbReference type="Gene3D" id="3.60.21.10">
    <property type="match status" value="1"/>
</dbReference>
<dbReference type="InterPro" id="IPR004843">
    <property type="entry name" value="Calcineurin-like_PHP_ApaH"/>
</dbReference>
<dbReference type="InterPro" id="IPR050884">
    <property type="entry name" value="CNP_phosphodiesterase-III"/>
</dbReference>
<dbReference type="InterPro" id="IPR026575">
    <property type="entry name" value="GpdQ/CpdA-like"/>
</dbReference>
<dbReference type="InterPro" id="IPR029052">
    <property type="entry name" value="Metallo-depent_PP-like"/>
</dbReference>
<dbReference type="NCBIfam" id="NF008359">
    <property type="entry name" value="PRK11148.1"/>
    <property type="match status" value="1"/>
</dbReference>
<dbReference type="PANTHER" id="PTHR42988:SF2">
    <property type="entry name" value="CYCLIC NUCLEOTIDE PHOSPHODIESTERASE CBUA0032-RELATED"/>
    <property type="match status" value="1"/>
</dbReference>
<dbReference type="PANTHER" id="PTHR42988">
    <property type="entry name" value="PHOSPHOHYDROLASE"/>
    <property type="match status" value="1"/>
</dbReference>
<dbReference type="Pfam" id="PF00149">
    <property type="entry name" value="Metallophos"/>
    <property type="match status" value="1"/>
</dbReference>
<dbReference type="SUPFAM" id="SSF56300">
    <property type="entry name" value="Metallo-dependent phosphatases"/>
    <property type="match status" value="1"/>
</dbReference>
<keyword id="KW-0114">cAMP</keyword>
<keyword id="KW-0378">Hydrolase</keyword>
<keyword id="KW-0408">Iron</keyword>
<keyword id="KW-0479">Metal-binding</keyword>
<keyword id="KW-0547">Nucleotide-binding</keyword>
<accession>D4P095</accession>